<reference key="1">
    <citation type="submission" date="2007-03" db="EMBL/GenBank/DDBJ databases">
        <authorList>
            <consortium name="NIH - Xenopus Gene Collection (XGC) project"/>
        </authorList>
    </citation>
    <scope>NUCLEOTIDE SEQUENCE [LARGE SCALE MRNA]</scope>
    <source>
        <tissue>Brain</tissue>
    </source>
</reference>
<protein>
    <recommendedName>
        <fullName>Doublesex- and mab-3-related transcription factor A2</fullName>
    </recommendedName>
    <alternativeName>
        <fullName>Doublesex- and mab-3-related transcription factor 5</fullName>
    </alternativeName>
</protein>
<gene>
    <name type="primary">dmrta2</name>
    <name type="synonym">dmrt5</name>
</gene>
<dbReference type="EMBL" id="BC136032">
    <property type="protein sequence ID" value="AAI36033.1"/>
    <property type="molecule type" value="mRNA"/>
</dbReference>
<dbReference type="RefSeq" id="NP_001096543.1">
    <property type="nucleotide sequence ID" value="NM_001103073.1"/>
</dbReference>
<dbReference type="RefSeq" id="XP_017948385.1">
    <property type="nucleotide sequence ID" value="XM_018092896.2"/>
</dbReference>
<dbReference type="SMR" id="A4QNP7"/>
<dbReference type="FunCoup" id="A4QNP7">
    <property type="interactions" value="947"/>
</dbReference>
<dbReference type="STRING" id="8364.ENSXETP00000007456"/>
<dbReference type="PaxDb" id="8364-ENSXETP00000006216"/>
<dbReference type="DNASU" id="100125187"/>
<dbReference type="GeneID" id="100125187"/>
<dbReference type="KEGG" id="xtr:100125187"/>
<dbReference type="AGR" id="Xenbase:XB-GENE-997963"/>
<dbReference type="CTD" id="63950"/>
<dbReference type="Xenbase" id="XB-GENE-997963">
    <property type="gene designation" value="dmrta2"/>
</dbReference>
<dbReference type="eggNOG" id="KOG3815">
    <property type="taxonomic scope" value="Eukaryota"/>
</dbReference>
<dbReference type="InParanoid" id="A4QNP7"/>
<dbReference type="OMA" id="LHKEQSY"/>
<dbReference type="OrthoDB" id="9942608at2759"/>
<dbReference type="Proteomes" id="UP000008143">
    <property type="component" value="Chromosome 4"/>
</dbReference>
<dbReference type="Bgee" id="ENSXETG00000002846">
    <property type="expression patterns" value="Expressed in neurula embryo and 4 other cell types or tissues"/>
</dbReference>
<dbReference type="GO" id="GO:0005634">
    <property type="term" value="C:nucleus"/>
    <property type="evidence" value="ECO:0007669"/>
    <property type="project" value="UniProtKB-SubCell"/>
</dbReference>
<dbReference type="GO" id="GO:0046872">
    <property type="term" value="F:metal ion binding"/>
    <property type="evidence" value="ECO:0007669"/>
    <property type="project" value="UniProtKB-KW"/>
</dbReference>
<dbReference type="GO" id="GO:0043565">
    <property type="term" value="F:sequence-specific DNA binding"/>
    <property type="evidence" value="ECO:0007669"/>
    <property type="project" value="InterPro"/>
</dbReference>
<dbReference type="GO" id="GO:0006355">
    <property type="term" value="P:regulation of DNA-templated transcription"/>
    <property type="evidence" value="ECO:0007669"/>
    <property type="project" value="InterPro"/>
</dbReference>
<dbReference type="CDD" id="cd14418">
    <property type="entry name" value="CUE_DMA_DMRTA2"/>
    <property type="match status" value="1"/>
</dbReference>
<dbReference type="FunFam" id="4.10.1040.10:FF:000001">
    <property type="entry name" value="doublesex- and mab-3-related transcription factor 1"/>
    <property type="match status" value="1"/>
</dbReference>
<dbReference type="Gene3D" id="4.10.1040.10">
    <property type="entry name" value="DM DNA-binding domain"/>
    <property type="match status" value="1"/>
</dbReference>
<dbReference type="InterPro" id="IPR001275">
    <property type="entry name" value="DM_DNA-bd"/>
</dbReference>
<dbReference type="InterPro" id="IPR036407">
    <property type="entry name" value="DM_DNA-bd_sf"/>
</dbReference>
<dbReference type="InterPro" id="IPR005173">
    <property type="entry name" value="DMA"/>
</dbReference>
<dbReference type="InterPro" id="IPR026607">
    <property type="entry name" value="DMRT"/>
</dbReference>
<dbReference type="InterPro" id="IPR046472">
    <property type="entry name" value="DMRT5_1_DMB_dom"/>
</dbReference>
<dbReference type="InterPro" id="IPR009060">
    <property type="entry name" value="UBA-like_sf"/>
</dbReference>
<dbReference type="PANTHER" id="PTHR12322">
    <property type="entry name" value="DOUBLESEX AND MAB-3 RELATED TRANSCRIPTION FACTOR DMRT"/>
    <property type="match status" value="1"/>
</dbReference>
<dbReference type="PANTHER" id="PTHR12322:SF76">
    <property type="entry name" value="DOUBLESEX- AND MAB-3-RELATED TRANSCRIPTION FACTOR A2"/>
    <property type="match status" value="1"/>
</dbReference>
<dbReference type="Pfam" id="PF00751">
    <property type="entry name" value="DM"/>
    <property type="match status" value="1"/>
</dbReference>
<dbReference type="Pfam" id="PF03474">
    <property type="entry name" value="DMA"/>
    <property type="match status" value="1"/>
</dbReference>
<dbReference type="Pfam" id="PF20624">
    <property type="entry name" value="DMRT5_DMB"/>
    <property type="match status" value="1"/>
</dbReference>
<dbReference type="SMART" id="SM00301">
    <property type="entry name" value="DM"/>
    <property type="match status" value="1"/>
</dbReference>
<dbReference type="SUPFAM" id="SSF82927">
    <property type="entry name" value="Cysteine-rich DNA binding domain, (DM domain)"/>
    <property type="match status" value="1"/>
</dbReference>
<dbReference type="SUPFAM" id="SSF46934">
    <property type="entry name" value="UBA-like"/>
    <property type="match status" value="1"/>
</dbReference>
<dbReference type="PROSITE" id="PS40000">
    <property type="entry name" value="DM_1"/>
    <property type="match status" value="1"/>
</dbReference>
<dbReference type="PROSITE" id="PS50809">
    <property type="entry name" value="DM_2"/>
    <property type="match status" value="1"/>
</dbReference>
<organism>
    <name type="scientific">Xenopus tropicalis</name>
    <name type="common">Western clawed frog</name>
    <name type="synonym">Silurana tropicalis</name>
    <dbReference type="NCBI Taxonomy" id="8364"/>
    <lineage>
        <taxon>Eukaryota</taxon>
        <taxon>Metazoa</taxon>
        <taxon>Chordata</taxon>
        <taxon>Craniata</taxon>
        <taxon>Vertebrata</taxon>
        <taxon>Euteleostomi</taxon>
        <taxon>Amphibia</taxon>
        <taxon>Batrachia</taxon>
        <taxon>Anura</taxon>
        <taxon>Pipoidea</taxon>
        <taxon>Pipidae</taxon>
        <taxon>Xenopodinae</taxon>
        <taxon>Xenopus</taxon>
        <taxon>Silurana</taxon>
    </lineage>
</organism>
<name>DMTA2_XENTR</name>
<accession>A4QNP7</accession>
<evidence type="ECO:0000255" key="1"/>
<evidence type="ECO:0000255" key="2">
    <source>
        <dbReference type="PROSITE-ProRule" id="PRU00070"/>
    </source>
</evidence>
<evidence type="ECO:0000256" key="3">
    <source>
        <dbReference type="SAM" id="MobiDB-lite"/>
    </source>
</evidence>
<evidence type="ECO:0000305" key="4"/>
<feature type="chain" id="PRO_0000333781" description="Doublesex- and mab-3-related transcription factor A2">
    <location>
        <begin position="1"/>
        <end position="437"/>
    </location>
</feature>
<feature type="domain" description="DMA" evidence="1">
    <location>
        <begin position="254"/>
        <end position="289"/>
    </location>
</feature>
<feature type="DNA-binding region" description="DM" evidence="2">
    <location>
        <begin position="49"/>
        <end position="96"/>
    </location>
</feature>
<feature type="region of interest" description="Disordered" evidence="3">
    <location>
        <begin position="163"/>
        <end position="254"/>
    </location>
</feature>
<feature type="region of interest" description="Disordered" evidence="3">
    <location>
        <begin position="297"/>
        <end position="317"/>
    </location>
</feature>
<feature type="compositionally biased region" description="Low complexity" evidence="3">
    <location>
        <begin position="179"/>
        <end position="201"/>
    </location>
</feature>
<feature type="compositionally biased region" description="Low complexity" evidence="3">
    <location>
        <begin position="223"/>
        <end position="235"/>
    </location>
</feature>
<proteinExistence type="evidence at transcript level"/>
<sequence length="437" mass="46420">MELNGPPVSQLPQTATSTASLPVTVAGTLLRGPQLLLRAAEKYPRTPKCARCRNHGVVSALKGHKRYCRWKDCMCAKCTLIAERQRVMAAQVALRRQQAQEENEARELQLLYGTAEGLALAAANGIIPPRPAYEVFGSVCTEGGTDSKIQKFDLFPKSLIPRSVTPQLSSGGKPVSPDSESVSGSAPGASSPEARPGSGSENGDGESLLSSPISKALKEGEESPSSISPLGSESGSDAEKDEQDPSSSSSARQRTPIDILTRVFPAQKRSVLELVLQGCGGDVVQAIEQILNNRGQDKSEETWSRDGALPSIQPSVSSTHRPLIAGALTPAIGTLGSRSAFSPLQPNGAHFGTEANAYQLGGHLGLNPLRLAYSAHSRGLAFMAPYSTAGFMPTLGFRPPMDYAFSDLMRDRANVHKDQVYTNGLYGPVVNNNAEKQ</sequence>
<comment type="function">
    <text>May be involved in sexual development.</text>
</comment>
<comment type="subcellular location">
    <subcellularLocation>
        <location evidence="2">Nucleus</location>
    </subcellularLocation>
</comment>
<comment type="similarity">
    <text evidence="4">Belongs to the DMRT family.</text>
</comment>
<keyword id="KW-0238">DNA-binding</keyword>
<keyword id="KW-0479">Metal-binding</keyword>
<keyword id="KW-0539">Nucleus</keyword>
<keyword id="KW-1185">Reference proteome</keyword>
<keyword id="KW-0862">Zinc</keyword>